<evidence type="ECO:0000250" key="1">
    <source>
        <dbReference type="UniProtKB" id="Q708W2"/>
    </source>
</evidence>
<evidence type="ECO:0000255" key="2"/>
<evidence type="ECO:0000255" key="3">
    <source>
        <dbReference type="PROSITE-ProRule" id="PRU00089"/>
    </source>
</evidence>
<evidence type="ECO:0000256" key="4">
    <source>
        <dbReference type="SAM" id="MobiDB-lite"/>
    </source>
</evidence>
<evidence type="ECO:0000269" key="5">
    <source>
    </source>
</evidence>
<evidence type="ECO:0000303" key="6">
    <source>
    </source>
</evidence>
<evidence type="ECO:0000305" key="7"/>
<evidence type="ECO:0000312" key="8">
    <source>
        <dbReference type="EMBL" id="AAH81355.1"/>
    </source>
</evidence>
<comment type="function">
    <text evidence="1">Key transcription factor required for motile ciliogenesis. Activates genes essential for motile cilia formation and function.</text>
</comment>
<comment type="subcellular location">
    <subcellularLocation>
        <location evidence="2 7">Nucleus</location>
    </subcellularLocation>
</comment>
<comment type="tissue specificity">
    <text evidence="5">Expressed diffusely through much of gastrula and neurula stage embryos. At stage 23 (late neurula), limited to the otic vesicle. By stage 28 (tailbud), also expressed transiently in the presumptive nephrostomes of the pronephros. At stage 35 (early tadpole), expressed broadly in the head and strongly expressed in the developing gill structures.</text>
</comment>
<comment type="similarity">
    <text evidence="7">Belongs to the FOXJ1 family.</text>
</comment>
<organism>
    <name type="scientific">Xenopus tropicalis</name>
    <name type="common">Western clawed frog</name>
    <name type="synonym">Silurana tropicalis</name>
    <dbReference type="NCBI Taxonomy" id="8364"/>
    <lineage>
        <taxon>Eukaryota</taxon>
        <taxon>Metazoa</taxon>
        <taxon>Chordata</taxon>
        <taxon>Craniata</taxon>
        <taxon>Vertebrata</taxon>
        <taxon>Euteleostomi</taxon>
        <taxon>Amphibia</taxon>
        <taxon>Batrachia</taxon>
        <taxon>Anura</taxon>
        <taxon>Pipoidea</taxon>
        <taxon>Pipidae</taxon>
        <taxon>Xenopodinae</taxon>
        <taxon>Xenopus</taxon>
        <taxon>Silurana</taxon>
    </lineage>
</organism>
<dbReference type="EMBL" id="BC081355">
    <property type="protein sequence ID" value="AAH81355.1"/>
    <property type="molecule type" value="mRNA"/>
</dbReference>
<dbReference type="RefSeq" id="NP_001008143.1">
    <property type="nucleotide sequence ID" value="NM_001008142.2"/>
</dbReference>
<dbReference type="SMR" id="Q66IG8"/>
<dbReference type="STRING" id="8364.ENSXETP00000029314"/>
<dbReference type="PaxDb" id="8364-ENSXETP00000052832"/>
<dbReference type="DNASU" id="493505"/>
<dbReference type="GeneID" id="493505"/>
<dbReference type="KEGG" id="xtr:493505"/>
<dbReference type="AGR" id="Xenbase:XB-GENE-919738"/>
<dbReference type="CTD" id="493505"/>
<dbReference type="Xenbase" id="XB-GENE-919738">
    <property type="gene designation" value="foxj1.2"/>
</dbReference>
<dbReference type="eggNOG" id="KOG2294">
    <property type="taxonomic scope" value="Eukaryota"/>
</dbReference>
<dbReference type="HOGENOM" id="CLU_050055_0_0_1"/>
<dbReference type="InParanoid" id="Q66IG8"/>
<dbReference type="OMA" id="SSHHMQH"/>
<dbReference type="OrthoDB" id="5954824at2759"/>
<dbReference type="PhylomeDB" id="Q66IG8"/>
<dbReference type="TreeFam" id="TF333250"/>
<dbReference type="Proteomes" id="UP000008143">
    <property type="component" value="Chromosome 9"/>
</dbReference>
<dbReference type="Bgee" id="ENSXETG00000024431">
    <property type="expression patterns" value="Expressed in neurula embryo and 7 other cell types or tissues"/>
</dbReference>
<dbReference type="ExpressionAtlas" id="Q66IG8">
    <property type="expression patterns" value="differential"/>
</dbReference>
<dbReference type="GO" id="GO:0005634">
    <property type="term" value="C:nucleus"/>
    <property type="evidence" value="ECO:0000250"/>
    <property type="project" value="UniProtKB"/>
</dbReference>
<dbReference type="GO" id="GO:0003677">
    <property type="term" value="F:DNA binding"/>
    <property type="evidence" value="ECO:0000303"/>
    <property type="project" value="UniProtKB"/>
</dbReference>
<dbReference type="GO" id="GO:0003700">
    <property type="term" value="F:DNA-binding transcription factor activity"/>
    <property type="evidence" value="ECO:0000303"/>
    <property type="project" value="UniProtKB"/>
</dbReference>
<dbReference type="GO" id="GO:0043565">
    <property type="term" value="F:sequence-specific DNA binding"/>
    <property type="evidence" value="ECO:0007669"/>
    <property type="project" value="InterPro"/>
</dbReference>
<dbReference type="GO" id="GO:0060271">
    <property type="term" value="P:cilium assembly"/>
    <property type="evidence" value="ECO:0000250"/>
    <property type="project" value="UniProtKB"/>
</dbReference>
<dbReference type="GO" id="GO:0006355">
    <property type="term" value="P:regulation of DNA-templated transcription"/>
    <property type="evidence" value="ECO:0000303"/>
    <property type="project" value="UniProtKB"/>
</dbReference>
<dbReference type="CDD" id="cd20023">
    <property type="entry name" value="FH_FOXJ1"/>
    <property type="match status" value="1"/>
</dbReference>
<dbReference type="FunFam" id="1.10.10.10:FF:000030">
    <property type="entry name" value="Forkhead box protein K2"/>
    <property type="match status" value="1"/>
</dbReference>
<dbReference type="Gene3D" id="1.10.10.10">
    <property type="entry name" value="Winged helix-like DNA-binding domain superfamily/Winged helix DNA-binding domain"/>
    <property type="match status" value="1"/>
</dbReference>
<dbReference type="InterPro" id="IPR047512">
    <property type="entry name" value="FH_FOXJ1"/>
</dbReference>
<dbReference type="InterPro" id="IPR001766">
    <property type="entry name" value="Fork_head_dom"/>
</dbReference>
<dbReference type="InterPro" id="IPR047513">
    <property type="entry name" value="FOXJ1"/>
</dbReference>
<dbReference type="InterPro" id="IPR018122">
    <property type="entry name" value="TF_fork_head_CS_1"/>
</dbReference>
<dbReference type="InterPro" id="IPR030456">
    <property type="entry name" value="TF_fork_head_CS_2"/>
</dbReference>
<dbReference type="InterPro" id="IPR036388">
    <property type="entry name" value="WH-like_DNA-bd_sf"/>
</dbReference>
<dbReference type="InterPro" id="IPR036390">
    <property type="entry name" value="WH_DNA-bd_sf"/>
</dbReference>
<dbReference type="PANTHER" id="PTHR46805">
    <property type="entry name" value="FORKHEAD BOX PROTEIN J1"/>
    <property type="match status" value="1"/>
</dbReference>
<dbReference type="PANTHER" id="PTHR46805:SF4">
    <property type="entry name" value="FORKHEAD BOX PROTEIN J1.2"/>
    <property type="match status" value="1"/>
</dbReference>
<dbReference type="Pfam" id="PF00250">
    <property type="entry name" value="Forkhead"/>
    <property type="match status" value="1"/>
</dbReference>
<dbReference type="PRINTS" id="PR00053">
    <property type="entry name" value="FORKHEAD"/>
</dbReference>
<dbReference type="SMART" id="SM00339">
    <property type="entry name" value="FH"/>
    <property type="match status" value="1"/>
</dbReference>
<dbReference type="SUPFAM" id="SSF46785">
    <property type="entry name" value="Winged helix' DNA-binding domain"/>
    <property type="match status" value="1"/>
</dbReference>
<dbReference type="PROSITE" id="PS00657">
    <property type="entry name" value="FORK_HEAD_1"/>
    <property type="match status" value="1"/>
</dbReference>
<dbReference type="PROSITE" id="PS00658">
    <property type="entry name" value="FORK_HEAD_2"/>
    <property type="match status" value="1"/>
</dbReference>
<dbReference type="PROSITE" id="PS50039">
    <property type="entry name" value="FORK_HEAD_3"/>
    <property type="match status" value="1"/>
</dbReference>
<gene>
    <name evidence="6" type="primary">foxj1.2</name>
</gene>
<sequence length="371" mass="41890">MPVLSTAHRLPLSVERDCSREDDSLTNLQWLQDFSILSTDLSSIANSRPPLPRASQGPCSPPAGDTASCQAPRTGKQRSVAVPTAWASLPTPSPSPVQEVDYRTNANIKPPYSYATLICMAMEASQQRKLTLSAIYSWITQNFCYYRHADPSWQNSIRHNLSLNKCFMKVPRGKDEPGKGGFWQMDPRYADMFVNGVLKRRRMPASHLDPPRCNKAIAHHPYLPVSRPSSHHMQHISGGHRQSRRYEKPNPVLPALRAPERQGDALFTPEDPLQGSNFDDLDLQTALISMCWEGDLAASNLNSTLTGTSGMDMNLQDPPMQDNHWYLSTEGQQTWEQVKEEPVVEQWYNETGFVEDVLYECPPWERVETLL</sequence>
<protein>
    <recommendedName>
        <fullName>Forkhead box protein J1.2</fullName>
        <shortName>FoxJ1.2</shortName>
    </recommendedName>
</protein>
<proteinExistence type="evidence at transcript level"/>
<accession>Q66IG8</accession>
<name>FXJ12_XENTR</name>
<reference evidence="8" key="1">
    <citation type="submission" date="2004-08" db="EMBL/GenBank/DDBJ databases">
        <authorList>
            <consortium name="NIH - Xenopus Gene Collection (XGC) project"/>
        </authorList>
    </citation>
    <scope>NUCLEOTIDE SEQUENCE [LARGE SCALE MRNA]</scope>
    <source>
        <tissue evidence="8">Embryo</tissue>
    </source>
</reference>
<reference evidence="7" key="2">
    <citation type="journal article" date="2006" name="Gene Expr. Patterns">
        <title>Developmental expression of FoxJ1.2, FoxJ2, and FoxQ1 in Xenopus tropicalis.</title>
        <authorList>
            <person name="Choi V.M."/>
            <person name="Harland R.M."/>
            <person name="Khokha M.K."/>
        </authorList>
    </citation>
    <scope>TISSUE SPECIFICITY</scope>
</reference>
<keyword id="KW-0010">Activator</keyword>
<keyword id="KW-0970">Cilium biogenesis/degradation</keyword>
<keyword id="KW-0238">DNA-binding</keyword>
<keyword id="KW-0539">Nucleus</keyword>
<keyword id="KW-1185">Reference proteome</keyword>
<keyword id="KW-0804">Transcription</keyword>
<keyword id="KW-0805">Transcription regulation</keyword>
<feature type="chain" id="PRO_0000250446" description="Forkhead box protein J1.2">
    <location>
        <begin position="1"/>
        <end position="371"/>
    </location>
</feature>
<feature type="DNA-binding region" description="Fork-head" evidence="2 3">
    <location>
        <begin position="109"/>
        <end position="203"/>
    </location>
</feature>
<feature type="region of interest" description="Disordered" evidence="4">
    <location>
        <begin position="45"/>
        <end position="74"/>
    </location>
</feature>
<feature type="region of interest" description="Disordered" evidence="4">
    <location>
        <begin position="80"/>
        <end position="99"/>
    </location>
</feature>
<feature type="region of interest" description="Disordered" evidence="4">
    <location>
        <begin position="228"/>
        <end position="248"/>
    </location>
</feature>